<evidence type="ECO:0000255" key="1">
    <source>
        <dbReference type="HAMAP-Rule" id="MF_00695"/>
    </source>
</evidence>
<keyword id="KW-0997">Cell inner membrane</keyword>
<keyword id="KW-1003">Cell membrane</keyword>
<keyword id="KW-0963">Cytoplasm</keyword>
<keyword id="KW-0472">Membrane</keyword>
<dbReference type="EMBL" id="BA000031">
    <property type="protein sequence ID" value="BAC59392.1"/>
    <property type="molecule type" value="Genomic_DNA"/>
</dbReference>
<dbReference type="RefSeq" id="NP_797508.1">
    <property type="nucleotide sequence ID" value="NC_004603.1"/>
</dbReference>
<dbReference type="RefSeq" id="WP_005459996.1">
    <property type="nucleotide sequence ID" value="NC_004603.1"/>
</dbReference>
<dbReference type="SMR" id="Q87QM0"/>
<dbReference type="GeneID" id="1188634"/>
<dbReference type="KEGG" id="vpa:VP1129"/>
<dbReference type="PATRIC" id="fig|223926.6.peg.1070"/>
<dbReference type="eggNOG" id="COG2915">
    <property type="taxonomic scope" value="Bacteria"/>
</dbReference>
<dbReference type="HOGENOM" id="CLU_098920_0_0_6"/>
<dbReference type="Proteomes" id="UP000002493">
    <property type="component" value="Chromosome 1"/>
</dbReference>
<dbReference type="GO" id="GO:0005737">
    <property type="term" value="C:cytoplasm"/>
    <property type="evidence" value="ECO:0007669"/>
    <property type="project" value="UniProtKB-SubCell"/>
</dbReference>
<dbReference type="GO" id="GO:0005886">
    <property type="term" value="C:plasma membrane"/>
    <property type="evidence" value="ECO:0007669"/>
    <property type="project" value="UniProtKB-SubCell"/>
</dbReference>
<dbReference type="Gene3D" id="1.10.3890.10">
    <property type="entry name" value="HflD-like"/>
    <property type="match status" value="1"/>
</dbReference>
<dbReference type="HAMAP" id="MF_00695">
    <property type="entry name" value="HflD_protein"/>
    <property type="match status" value="1"/>
</dbReference>
<dbReference type="InterPro" id="IPR007451">
    <property type="entry name" value="HflD"/>
</dbReference>
<dbReference type="InterPro" id="IPR035932">
    <property type="entry name" value="HflD-like_sf"/>
</dbReference>
<dbReference type="NCBIfam" id="NF001246">
    <property type="entry name" value="PRK00218.1-2"/>
    <property type="match status" value="1"/>
</dbReference>
<dbReference type="NCBIfam" id="NF001248">
    <property type="entry name" value="PRK00218.1-4"/>
    <property type="match status" value="1"/>
</dbReference>
<dbReference type="PANTHER" id="PTHR38100">
    <property type="entry name" value="HIGH FREQUENCY LYSOGENIZATION PROTEIN HFLD"/>
    <property type="match status" value="1"/>
</dbReference>
<dbReference type="PANTHER" id="PTHR38100:SF1">
    <property type="entry name" value="HIGH FREQUENCY LYSOGENIZATION PROTEIN HFLD"/>
    <property type="match status" value="1"/>
</dbReference>
<dbReference type="Pfam" id="PF04356">
    <property type="entry name" value="DUF489"/>
    <property type="match status" value="1"/>
</dbReference>
<dbReference type="SUPFAM" id="SSF101322">
    <property type="entry name" value="YcfC-like"/>
    <property type="match status" value="1"/>
</dbReference>
<sequence>MANTLYDRTIAFAGICQAVALVQQVARNGHCDQDAFETSMNAILNTNPANTIGVFGREADLKLGLECLVKGIDSTPSGSEITRYIISLMALERKLTARTDAMSQLGDRIQMAKRQTEHFELLEDQMISNLASIYLDVVSPIGPRIQVTGTPSVLQQTANQHKVRALLLSGIRSAVLWRQVGGKRRHLIFGRKKMVEQAQILLARM</sequence>
<proteinExistence type="inferred from homology"/>
<feature type="chain" id="PRO_0000071591" description="High frequency lysogenization protein HflD homolog">
    <location>
        <begin position="1"/>
        <end position="205"/>
    </location>
</feature>
<protein>
    <recommendedName>
        <fullName evidence="1">High frequency lysogenization protein HflD homolog</fullName>
    </recommendedName>
</protein>
<organism>
    <name type="scientific">Vibrio parahaemolyticus serotype O3:K6 (strain RIMD 2210633)</name>
    <dbReference type="NCBI Taxonomy" id="223926"/>
    <lineage>
        <taxon>Bacteria</taxon>
        <taxon>Pseudomonadati</taxon>
        <taxon>Pseudomonadota</taxon>
        <taxon>Gammaproteobacteria</taxon>
        <taxon>Vibrionales</taxon>
        <taxon>Vibrionaceae</taxon>
        <taxon>Vibrio</taxon>
    </lineage>
</organism>
<reference key="1">
    <citation type="journal article" date="2003" name="Lancet">
        <title>Genome sequence of Vibrio parahaemolyticus: a pathogenic mechanism distinct from that of V. cholerae.</title>
        <authorList>
            <person name="Makino K."/>
            <person name="Oshima K."/>
            <person name="Kurokawa K."/>
            <person name="Yokoyama K."/>
            <person name="Uda T."/>
            <person name="Tagomori K."/>
            <person name="Iijima Y."/>
            <person name="Najima M."/>
            <person name="Nakano M."/>
            <person name="Yamashita A."/>
            <person name="Kubota Y."/>
            <person name="Kimura S."/>
            <person name="Yasunaga T."/>
            <person name="Honda T."/>
            <person name="Shinagawa H."/>
            <person name="Hattori M."/>
            <person name="Iida T."/>
        </authorList>
    </citation>
    <scope>NUCLEOTIDE SEQUENCE [LARGE SCALE GENOMIC DNA]</scope>
    <source>
        <strain>RIMD 2210633</strain>
    </source>
</reference>
<gene>
    <name evidence="1" type="primary">hflD</name>
    <name type="ordered locus">VP1129</name>
</gene>
<name>HFLD_VIBPA</name>
<comment type="subcellular location">
    <subcellularLocation>
        <location>Cytoplasm</location>
    </subcellularLocation>
    <subcellularLocation>
        <location evidence="1">Cell inner membrane</location>
        <topology evidence="1">Peripheral membrane protein</topology>
        <orientation evidence="1">Cytoplasmic side</orientation>
    </subcellularLocation>
</comment>
<comment type="similarity">
    <text evidence="1">Belongs to the HflD family.</text>
</comment>
<accession>Q87QM0</accession>